<name>SAMD1_MOUSE</name>
<organism>
    <name type="scientific">Mus musculus</name>
    <name type="common">Mouse</name>
    <dbReference type="NCBI Taxonomy" id="10090"/>
    <lineage>
        <taxon>Eukaryota</taxon>
        <taxon>Metazoa</taxon>
        <taxon>Chordata</taxon>
        <taxon>Craniata</taxon>
        <taxon>Vertebrata</taxon>
        <taxon>Euteleostomi</taxon>
        <taxon>Mammalia</taxon>
        <taxon>Eutheria</taxon>
        <taxon>Euarchontoglires</taxon>
        <taxon>Glires</taxon>
        <taxon>Rodentia</taxon>
        <taxon>Myomorpha</taxon>
        <taxon>Muroidea</taxon>
        <taxon>Muridae</taxon>
        <taxon>Murinae</taxon>
        <taxon>Mus</taxon>
        <taxon>Mus</taxon>
    </lineage>
</organism>
<comment type="function">
    <text evidence="5 6">Unmethylated CpG islands (CGIs)-binding protein which localizes to H3K4me3-decorated CGIs, where it acts as a transcriptional repressor (PubMed:33980486, PubMed:34006929). Tethers L3MBTL3 to chromatin and interacts with the KDM1A histone demethylase complex to modulate H3K4me2 and H3K4me3 levels at CGIs (PubMed:33980486). Plays a role in atherogenesis by binding with LDL on cell surface and promoting LDL oxidation which leads to the formation of foam cell (PubMed:34006929).</text>
</comment>
<comment type="subunit">
    <text evidence="1 5">Homopolymerize into a closed pentameric ring (By similarity). Interacts (via SAM domain) with L3MBTL3 (via SAM domain); the interaction mediates L3MBTL3 binding to chromatin (PubMed:33980486). Interacts (via WH domain) with KDM1A; the interaction modulates KDM1A function (PubMed:33980486).</text>
</comment>
<comment type="subcellular location">
    <subcellularLocation>
        <location evidence="5">Nucleus</location>
    </subcellularLocation>
    <subcellularLocation>
        <location evidence="5">Chromosome</location>
    </subcellularLocation>
    <subcellularLocation>
        <location evidence="6">Secreted</location>
    </subcellularLocation>
    <text evidence="6">In atherosclerotic lesions, it is found in the extracellular compartment and in foam cells cytoplasm.</text>
</comment>
<comment type="tissue specificity">
    <text evidence="5 6">Expressed to similar levels in different organs. Expressed at higher levels in bone marrow, osteoclasts and spleen (PubMed:33980486). Expressed in vascular smooth muscle cells (PubMed:34006929).</text>
</comment>
<comment type="induction">
    <text evidence="6">Expression is inhibited by miRNA MIR378C (PubMed:34006929). Expression is induced by PDGF (PubMed:34006929).</text>
</comment>
<comment type="domain">
    <text evidence="1">Winged-helix (WH) domain directly recognizes and binds unmethylated CpG-containing DNA via simultaneous interactions with both the major and the minor groove of DNA.</text>
</comment>
<dbReference type="EMBL" id="AC156028">
    <property type="status" value="NOT_ANNOTATED_CDS"/>
    <property type="molecule type" value="Genomic_DNA"/>
</dbReference>
<dbReference type="CCDS" id="CCDS40404.1"/>
<dbReference type="RefSeq" id="NP_001074884.1">
    <property type="nucleotide sequence ID" value="NM_001081415.2"/>
</dbReference>
<dbReference type="SMR" id="D3YXK1"/>
<dbReference type="BioGRID" id="578535">
    <property type="interactions" value="1"/>
</dbReference>
<dbReference type="FunCoup" id="D3YXK1">
    <property type="interactions" value="62"/>
</dbReference>
<dbReference type="STRING" id="10090.ENSMUSP00000092853"/>
<dbReference type="GlyGen" id="D3YXK1">
    <property type="glycosylation" value="1 site"/>
</dbReference>
<dbReference type="iPTMnet" id="D3YXK1"/>
<dbReference type="PhosphoSitePlus" id="D3YXK1"/>
<dbReference type="jPOST" id="D3YXK1"/>
<dbReference type="PaxDb" id="10090-ENSMUSP00000092853"/>
<dbReference type="PeptideAtlas" id="D3YXK1"/>
<dbReference type="ProteomicsDB" id="256589"/>
<dbReference type="Pumba" id="D3YXK1"/>
<dbReference type="Ensembl" id="ENSMUST00000095228.5">
    <property type="protein sequence ID" value="ENSMUSP00000092853.4"/>
    <property type="gene ID" value="ENSMUSG00000079003.4"/>
</dbReference>
<dbReference type="GeneID" id="666704"/>
<dbReference type="KEGG" id="mmu:666704"/>
<dbReference type="UCSC" id="uc009mln.1">
    <property type="organism name" value="mouse"/>
</dbReference>
<dbReference type="AGR" id="MGI:2142433"/>
<dbReference type="CTD" id="90378"/>
<dbReference type="MGI" id="MGI:2142433">
    <property type="gene designation" value="Samd1"/>
</dbReference>
<dbReference type="VEuPathDB" id="HostDB:ENSMUSG00000079003"/>
<dbReference type="eggNOG" id="KOG2747">
    <property type="taxonomic scope" value="Eukaryota"/>
</dbReference>
<dbReference type="GeneTree" id="ENSGT00530000063936"/>
<dbReference type="HOGENOM" id="CLU_022507_0_0_1"/>
<dbReference type="InParanoid" id="D3YXK1"/>
<dbReference type="OMA" id="SPRYQEW"/>
<dbReference type="OrthoDB" id="10004495at2759"/>
<dbReference type="PhylomeDB" id="D3YXK1"/>
<dbReference type="TreeFam" id="TF332984"/>
<dbReference type="BioGRID-ORCS" id="666704">
    <property type="hits" value="10 hits in 75 CRISPR screens"/>
</dbReference>
<dbReference type="ChiTaRS" id="Samd1">
    <property type="organism name" value="mouse"/>
</dbReference>
<dbReference type="PRO" id="PR:D3YXK1"/>
<dbReference type="Proteomes" id="UP000000589">
    <property type="component" value="Chromosome 8"/>
</dbReference>
<dbReference type="RNAct" id="D3YXK1">
    <property type="molecule type" value="protein"/>
</dbReference>
<dbReference type="Bgee" id="ENSMUSG00000079003">
    <property type="expression patterns" value="Expressed in cortical plate and 158 other cell types or tissues"/>
</dbReference>
<dbReference type="GO" id="GO:0005694">
    <property type="term" value="C:chromosome"/>
    <property type="evidence" value="ECO:0007669"/>
    <property type="project" value="UniProtKB-SubCell"/>
</dbReference>
<dbReference type="GO" id="GO:0005615">
    <property type="term" value="C:extracellular space"/>
    <property type="evidence" value="ECO:0000314"/>
    <property type="project" value="UniProtKB"/>
</dbReference>
<dbReference type="GO" id="GO:0005634">
    <property type="term" value="C:nucleus"/>
    <property type="evidence" value="ECO:0000250"/>
    <property type="project" value="UniProtKB"/>
</dbReference>
<dbReference type="GO" id="GO:0003682">
    <property type="term" value="F:chromatin binding"/>
    <property type="evidence" value="ECO:0000250"/>
    <property type="project" value="UniProtKB"/>
</dbReference>
<dbReference type="GO" id="GO:0003677">
    <property type="term" value="F:DNA binding"/>
    <property type="evidence" value="ECO:0007669"/>
    <property type="project" value="InterPro"/>
</dbReference>
<dbReference type="GO" id="GO:0030169">
    <property type="term" value="F:low-density lipoprotein particle binding"/>
    <property type="evidence" value="ECO:0000314"/>
    <property type="project" value="UniProtKB"/>
</dbReference>
<dbReference type="GO" id="GO:0006325">
    <property type="term" value="P:chromatin organization"/>
    <property type="evidence" value="ECO:0007669"/>
    <property type="project" value="UniProtKB-KW"/>
</dbReference>
<dbReference type="GO" id="GO:0090077">
    <property type="term" value="P:foam cell differentiation"/>
    <property type="evidence" value="ECO:0000314"/>
    <property type="project" value="UniProtKB"/>
</dbReference>
<dbReference type="GO" id="GO:0034439">
    <property type="term" value="P:lipoprotein lipid oxidation"/>
    <property type="evidence" value="ECO:0000314"/>
    <property type="project" value="UniProtKB"/>
</dbReference>
<dbReference type="GO" id="GO:0000122">
    <property type="term" value="P:negative regulation of transcription by RNA polymerase II"/>
    <property type="evidence" value="ECO:0000314"/>
    <property type="project" value="UniProtKB"/>
</dbReference>
<dbReference type="GO" id="GO:0160217">
    <property type="term" value="P:negative regulation of transcription initiation-coupled chromatin remodeling"/>
    <property type="evidence" value="ECO:0000250"/>
    <property type="project" value="UniProtKB"/>
</dbReference>
<dbReference type="GO" id="GO:0051260">
    <property type="term" value="P:protein homooligomerization"/>
    <property type="evidence" value="ECO:0000250"/>
    <property type="project" value="UniProtKB"/>
</dbReference>
<dbReference type="CDD" id="cd09583">
    <property type="entry name" value="SAM_Atherin-like"/>
    <property type="match status" value="1"/>
</dbReference>
<dbReference type="Gene3D" id="1.10.150.50">
    <property type="entry name" value="Transcription Factor, Ets-1"/>
    <property type="match status" value="1"/>
</dbReference>
<dbReference type="InterPro" id="IPR001660">
    <property type="entry name" value="SAM"/>
</dbReference>
<dbReference type="InterPro" id="IPR013761">
    <property type="entry name" value="SAM/pointed_sf"/>
</dbReference>
<dbReference type="InterPro" id="IPR056983">
    <property type="entry name" value="SAMD1-like_SHD"/>
</dbReference>
<dbReference type="InterPro" id="IPR048589">
    <property type="entry name" value="SAMD1-like_WH"/>
</dbReference>
<dbReference type="PANTHER" id="PTHR36292:SF2">
    <property type="entry name" value="STERILE ALPHA MOTIF DOMAIN-CONTAINING PROTEIN 1"/>
    <property type="match status" value="1"/>
</dbReference>
<dbReference type="PANTHER" id="PTHR36292">
    <property type="entry name" value="UPF0575 PROTEIN C19ORF67"/>
    <property type="match status" value="1"/>
</dbReference>
<dbReference type="Pfam" id="PF00536">
    <property type="entry name" value="SAM_1"/>
    <property type="match status" value="1"/>
</dbReference>
<dbReference type="Pfam" id="PF24971">
    <property type="entry name" value="SAMD1_SHD"/>
    <property type="match status" value="1"/>
</dbReference>
<dbReference type="Pfam" id="PF21524">
    <property type="entry name" value="SAMD1_WH"/>
    <property type="match status" value="1"/>
</dbReference>
<dbReference type="SMART" id="SM00454">
    <property type="entry name" value="SAM"/>
    <property type="match status" value="1"/>
</dbReference>
<dbReference type="SUPFAM" id="SSF47769">
    <property type="entry name" value="SAM/Pointed domain"/>
    <property type="match status" value="1"/>
</dbReference>
<dbReference type="PROSITE" id="PS50105">
    <property type="entry name" value="SAM_DOMAIN"/>
    <property type="match status" value="1"/>
</dbReference>
<dbReference type="PROSITE" id="PS52014">
    <property type="entry name" value="SAMD1_WH"/>
    <property type="match status" value="1"/>
</dbReference>
<protein>
    <recommendedName>
        <fullName>Sterile alpha motif domain-containing protein 1</fullName>
        <shortName>SAM domain-containing protein 1</shortName>
    </recommendedName>
    <alternativeName>
        <fullName>Atherin</fullName>
    </alternativeName>
</protein>
<keyword id="KW-0156">Chromatin regulator</keyword>
<keyword id="KW-0158">Chromosome</keyword>
<keyword id="KW-0539">Nucleus</keyword>
<keyword id="KW-0597">Phosphoprotein</keyword>
<keyword id="KW-1185">Reference proteome</keyword>
<keyword id="KW-0964">Secreted</keyword>
<feature type="chain" id="PRO_0000416118" description="Sterile alpha motif domain-containing protein 1">
    <location>
        <begin position="1"/>
        <end position="519"/>
    </location>
</feature>
<feature type="domain" description="SAMD1-like winged helix (WH)" evidence="3">
    <location>
        <begin position="23"/>
        <end position="99"/>
    </location>
</feature>
<feature type="domain" description="SAM" evidence="2">
    <location>
        <begin position="443"/>
        <end position="511"/>
    </location>
</feature>
<feature type="region of interest" description="Disordered" evidence="4">
    <location>
        <begin position="1"/>
        <end position="30"/>
    </location>
</feature>
<feature type="region of interest" description="Disordered" evidence="4">
    <location>
        <begin position="87"/>
        <end position="232"/>
    </location>
</feature>
<feature type="region of interest" description="Disordered" evidence="4">
    <location>
        <begin position="261"/>
        <end position="381"/>
    </location>
</feature>
<feature type="region of interest" description="Disordered" evidence="4">
    <location>
        <begin position="417"/>
        <end position="439"/>
    </location>
</feature>
<feature type="compositionally biased region" description="Pro residues" evidence="4">
    <location>
        <begin position="1"/>
        <end position="11"/>
    </location>
</feature>
<feature type="compositionally biased region" description="Low complexity" evidence="4">
    <location>
        <begin position="12"/>
        <end position="29"/>
    </location>
</feature>
<feature type="compositionally biased region" description="Pro residues" evidence="4">
    <location>
        <begin position="108"/>
        <end position="133"/>
    </location>
</feature>
<feature type="compositionally biased region" description="Low complexity" evidence="4">
    <location>
        <begin position="134"/>
        <end position="147"/>
    </location>
</feature>
<feature type="compositionally biased region" description="Low complexity" evidence="4">
    <location>
        <begin position="157"/>
        <end position="166"/>
    </location>
</feature>
<feature type="compositionally biased region" description="Pro residues" evidence="4">
    <location>
        <begin position="167"/>
        <end position="217"/>
    </location>
</feature>
<feature type="compositionally biased region" description="Low complexity" evidence="4">
    <location>
        <begin position="218"/>
        <end position="230"/>
    </location>
</feature>
<feature type="compositionally biased region" description="Basic and acidic residues" evidence="4">
    <location>
        <begin position="261"/>
        <end position="271"/>
    </location>
</feature>
<feature type="compositionally biased region" description="Acidic residues" evidence="4">
    <location>
        <begin position="308"/>
        <end position="325"/>
    </location>
</feature>
<feature type="modified residue" description="Phosphothreonine" evidence="1">
    <location>
        <position position="107"/>
    </location>
</feature>
<feature type="modified residue" description="Phosphoserine" evidence="8 9">
    <location>
        <position position="150"/>
    </location>
</feature>
<feature type="modified residue" description="Phosphoserine" evidence="1">
    <location>
        <position position="242"/>
    </location>
</feature>
<proteinExistence type="evidence at protein level"/>
<gene>
    <name evidence="7" type="primary">Samd1</name>
</gene>
<evidence type="ECO:0000250" key="1">
    <source>
        <dbReference type="UniProtKB" id="Q6SPF0"/>
    </source>
</evidence>
<evidence type="ECO:0000255" key="2">
    <source>
        <dbReference type="PROSITE-ProRule" id="PRU00184"/>
    </source>
</evidence>
<evidence type="ECO:0000255" key="3">
    <source>
        <dbReference type="PROSITE-ProRule" id="PRU01358"/>
    </source>
</evidence>
<evidence type="ECO:0000256" key="4">
    <source>
        <dbReference type="SAM" id="MobiDB-lite"/>
    </source>
</evidence>
<evidence type="ECO:0000269" key="5">
    <source>
    </source>
</evidence>
<evidence type="ECO:0000269" key="6">
    <source>
    </source>
</evidence>
<evidence type="ECO:0000312" key="7">
    <source>
        <dbReference type="MGI" id="MGI:2142433"/>
    </source>
</evidence>
<evidence type="ECO:0007744" key="8">
    <source>
    </source>
</evidence>
<evidence type="ECO:0007744" key="9">
    <source>
    </source>
</evidence>
<sequence length="519" mass="54533">MAGPPALPPPETAAAATTAAAASSSAASPHYQEWILDTIDSLRSRKARPDLERICRMVRRRHGPEPERTRAELEKLIQQRAVLRVSYKGSISYRNAARVQPPRRGATPPAPPRVPRGGPAAPPPTPAPPPAPVAAPTRAPRAAAATAPPSPGPAQPGPRAQRAAPLAAPPPAPAAPPAAAPPAGPRRAPPPAVAAREPPAPPQQQQPPPPQPQPPPEGGAARAGGPARPVSLREVVRYLGGSGGASGRLTRGRVQGLLEEEAARGRLERTRLGALALPRGDRPGRAPPAASARAARSKRGGEERVFEKEEEDEDEDEEEEEEDNVSEGSEVPESDRPAGAQHHQINGERGPQSAKERVKEWSPCGPYQGQDEGRGPAPGSCTRQVFPMTAVNKEGGSACVGAAPDSPSPVPLPPGKPALPGADGTPFGCPPGRKEKPTDPVEWTVMDVVEYFTEAGFPEQATAFQEQEIDGKSLLLMQRTDVLTGLSIRLGPALKIYEHHIKVLQQGHFEDDDPDGLLG</sequence>
<accession>D3YXK1</accession>
<reference key="1">
    <citation type="journal article" date="2009" name="PLoS Biol.">
        <title>Lineage-specific biology revealed by a finished genome assembly of the mouse.</title>
        <authorList>
            <person name="Church D.M."/>
            <person name="Goodstadt L."/>
            <person name="Hillier L.W."/>
            <person name="Zody M.C."/>
            <person name="Goldstein S."/>
            <person name="She X."/>
            <person name="Bult C.J."/>
            <person name="Agarwala R."/>
            <person name="Cherry J.L."/>
            <person name="DiCuccio M."/>
            <person name="Hlavina W."/>
            <person name="Kapustin Y."/>
            <person name="Meric P."/>
            <person name="Maglott D."/>
            <person name="Birtle Z."/>
            <person name="Marques A.C."/>
            <person name="Graves T."/>
            <person name="Zhou S."/>
            <person name="Teague B."/>
            <person name="Potamousis K."/>
            <person name="Churas C."/>
            <person name="Place M."/>
            <person name="Herschleb J."/>
            <person name="Runnheim R."/>
            <person name="Forrest D."/>
            <person name="Amos-Landgraf J."/>
            <person name="Schwartz D.C."/>
            <person name="Cheng Z."/>
            <person name="Lindblad-Toh K."/>
            <person name="Eichler E.E."/>
            <person name="Ponting C.P."/>
        </authorList>
    </citation>
    <scope>NUCLEOTIDE SEQUENCE [LARGE SCALE GENOMIC DNA]</scope>
    <source>
        <strain>C57BL/6J</strain>
    </source>
</reference>
<reference key="2">
    <citation type="journal article" date="2009" name="Immunity">
        <title>The phagosomal proteome in interferon-gamma-activated macrophages.</title>
        <authorList>
            <person name="Trost M."/>
            <person name="English L."/>
            <person name="Lemieux S."/>
            <person name="Courcelles M."/>
            <person name="Desjardins M."/>
            <person name="Thibault P."/>
        </authorList>
    </citation>
    <scope>PHOSPHORYLATION [LARGE SCALE ANALYSIS] AT SER-150</scope>
    <scope>IDENTIFICATION BY MASS SPECTROMETRY [LARGE SCALE ANALYSIS]</scope>
</reference>
<reference key="3">
    <citation type="journal article" date="2010" name="Cell">
        <title>A tissue-specific atlas of mouse protein phosphorylation and expression.</title>
        <authorList>
            <person name="Huttlin E.L."/>
            <person name="Jedrychowski M.P."/>
            <person name="Elias J.E."/>
            <person name="Goswami T."/>
            <person name="Rad R."/>
            <person name="Beausoleil S.A."/>
            <person name="Villen J."/>
            <person name="Haas W."/>
            <person name="Sowa M.E."/>
            <person name="Gygi S.P."/>
        </authorList>
    </citation>
    <scope>PHOSPHORYLATION [LARGE SCALE ANALYSIS] AT SER-150</scope>
    <scope>IDENTIFICATION BY MASS SPECTROMETRY [LARGE SCALE ANALYSIS]</scope>
    <source>
        <tissue>Testis</tissue>
    </source>
</reference>
<reference key="4">
    <citation type="journal article" date="2021" name="Sci. Adv.">
        <title>The SAM domain-containing protein 1 (SAMD1) acts as a repressive chromatin regulator at unmethylated CpG islands.</title>
        <authorList>
            <person name="Stielow B."/>
            <person name="Zhou Y."/>
            <person name="Cao Y."/>
            <person name="Simon C."/>
            <person name="Pogoda H.M."/>
            <person name="Jiang J."/>
            <person name="Ren Y."/>
            <person name="Phanor S.K."/>
            <person name="Rohner I."/>
            <person name="Nist A."/>
            <person name="Stiewe T."/>
            <person name="Hammerschmidt M."/>
            <person name="Shi Y."/>
            <person name="Bulyk M.L."/>
            <person name="Wang Z."/>
            <person name="Liefke R."/>
        </authorList>
    </citation>
    <scope>FUNCTION</scope>
    <scope>SUBCELLULAR LOCATION</scope>
    <scope>TISSUE SPECIFICITY</scope>
</reference>
<reference key="5">
    <citation type="journal article" date="2021" name="Sci. Rep.">
        <title>The miR-378c-Samd1 circuit promotes phenotypic modulation of vascular smooth muscle cells and foam cells formation in atherosclerosis lesions.</title>
        <authorList>
            <person name="Tian S."/>
            <person name="Cao Y."/>
            <person name="Wang J."/>
            <person name="Bi Y."/>
            <person name="Zhong J."/>
            <person name="Meng X."/>
            <person name="Sun W."/>
            <person name="Yang R."/>
            <person name="Gan L."/>
            <person name="Wang X."/>
            <person name="Li H."/>
            <person name="Wang R."/>
        </authorList>
    </citation>
    <scope>FUNCTION</scope>
    <scope>INDUCTION BY MIR-378C</scope>
    <scope>TISSUE SPECIFICITY</scope>
</reference>